<evidence type="ECO:0000255" key="1">
    <source>
        <dbReference type="HAMAP-Rule" id="MF_00435"/>
    </source>
</evidence>
<evidence type="ECO:0000255" key="2">
    <source>
        <dbReference type="PROSITE-ProRule" id="PRU01197"/>
    </source>
</evidence>
<evidence type="ECO:0000255" key="3">
    <source>
        <dbReference type="PROSITE-ProRule" id="PRU01198"/>
    </source>
</evidence>
<accession>B1LLU9</accession>
<sequence>MANYFNTLNLRQQLAQLGKCRFMGRDEFADGASYLQGKKVVIVGCGAQGLNQGLNMRDSGLDISYALRKEAIAEKRASWRKATENGFKVGTYEELIPQADLVVNLTPDKQHSDVVRTVQPLMKDGAALGYSHGFNIVEVGEQIRKDITVVMVAPKCPGTEVREEYKRGFGVPTLIAVHPENDPKGEGMAIAKAWAAATGGHRAGVLESSFVAEVKSDLMGEQTILCGMLQAGSLLCFDKLVEEGTDPAYAEKLIQFGWETITEALKQGGITLMMDRLSNPAKLRAYALSEQLKEIMAPLFQKHMDDIISGEFSSGMMADWANDDKKLLTWREETGKTAFETAPQYEGKIGEQEYFDKGVLMIAMVKAGVELAFETMVDSGIIEESAYYESLHELPLIANTIARKRLYEMNVVISDTAEYGNYLFSYACVPLLKPFMAELQPGDLGKAIPEGAVDNAQLRDVNEAIRSHAIEQVGKKLRGYMTDMKRIAVAG</sequence>
<reference key="1">
    <citation type="journal article" date="2008" name="J. Bacteriol.">
        <title>Insights into the environmental resistance gene pool from the genome sequence of the multidrug-resistant environmental isolate Escherichia coli SMS-3-5.</title>
        <authorList>
            <person name="Fricke W.F."/>
            <person name="Wright M.S."/>
            <person name="Lindell A.H."/>
            <person name="Harkins D.M."/>
            <person name="Baker-Austin C."/>
            <person name="Ravel J."/>
            <person name="Stepanauskas R."/>
        </authorList>
    </citation>
    <scope>NUCLEOTIDE SEQUENCE [LARGE SCALE GENOMIC DNA]</scope>
    <source>
        <strain>SMS-3-5 / SECEC</strain>
    </source>
</reference>
<proteinExistence type="inferred from homology"/>
<feature type="chain" id="PRO_1000190956" description="Ketol-acid reductoisomerase (NADP(+))">
    <location>
        <begin position="1"/>
        <end position="491"/>
    </location>
</feature>
<feature type="domain" description="KARI N-terminal Rossmann" evidence="2">
    <location>
        <begin position="15"/>
        <end position="208"/>
    </location>
</feature>
<feature type="domain" description="KARI C-terminal knotted 1" evidence="3">
    <location>
        <begin position="209"/>
        <end position="344"/>
    </location>
</feature>
<feature type="domain" description="KARI C-terminal knotted 2" evidence="3">
    <location>
        <begin position="345"/>
        <end position="484"/>
    </location>
</feature>
<feature type="active site" evidence="1">
    <location>
        <position position="132"/>
    </location>
</feature>
<feature type="binding site" evidence="1">
    <location>
        <begin position="45"/>
        <end position="48"/>
    </location>
    <ligand>
        <name>NADP(+)</name>
        <dbReference type="ChEBI" id="CHEBI:58349"/>
    </ligand>
</feature>
<feature type="binding site" evidence="1">
    <location>
        <position position="68"/>
    </location>
    <ligand>
        <name>NADP(+)</name>
        <dbReference type="ChEBI" id="CHEBI:58349"/>
    </ligand>
</feature>
<feature type="binding site" evidence="1">
    <location>
        <position position="76"/>
    </location>
    <ligand>
        <name>NADP(+)</name>
        <dbReference type="ChEBI" id="CHEBI:58349"/>
    </ligand>
</feature>
<feature type="binding site" evidence="1">
    <location>
        <position position="78"/>
    </location>
    <ligand>
        <name>NADP(+)</name>
        <dbReference type="ChEBI" id="CHEBI:58349"/>
    </ligand>
</feature>
<feature type="binding site" evidence="1">
    <location>
        <begin position="108"/>
        <end position="110"/>
    </location>
    <ligand>
        <name>NADP(+)</name>
        <dbReference type="ChEBI" id="CHEBI:58349"/>
    </ligand>
</feature>
<feature type="binding site" evidence="1">
    <location>
        <position position="158"/>
    </location>
    <ligand>
        <name>NADP(+)</name>
        <dbReference type="ChEBI" id="CHEBI:58349"/>
    </ligand>
</feature>
<feature type="binding site" evidence="1">
    <location>
        <position position="217"/>
    </location>
    <ligand>
        <name>Mg(2+)</name>
        <dbReference type="ChEBI" id="CHEBI:18420"/>
        <label>1</label>
    </ligand>
</feature>
<feature type="binding site" evidence="1">
    <location>
        <position position="217"/>
    </location>
    <ligand>
        <name>Mg(2+)</name>
        <dbReference type="ChEBI" id="CHEBI:18420"/>
        <label>2</label>
    </ligand>
</feature>
<feature type="binding site" evidence="1">
    <location>
        <position position="221"/>
    </location>
    <ligand>
        <name>Mg(2+)</name>
        <dbReference type="ChEBI" id="CHEBI:18420"/>
        <label>1</label>
    </ligand>
</feature>
<feature type="binding site" evidence="1">
    <location>
        <position position="389"/>
    </location>
    <ligand>
        <name>Mg(2+)</name>
        <dbReference type="ChEBI" id="CHEBI:18420"/>
        <label>2</label>
    </ligand>
</feature>
<feature type="binding site" evidence="1">
    <location>
        <position position="393"/>
    </location>
    <ligand>
        <name>Mg(2+)</name>
        <dbReference type="ChEBI" id="CHEBI:18420"/>
        <label>2</label>
    </ligand>
</feature>
<feature type="binding site" evidence="1">
    <location>
        <position position="414"/>
    </location>
    <ligand>
        <name>substrate</name>
    </ligand>
</feature>
<protein>
    <recommendedName>
        <fullName evidence="1">Ketol-acid reductoisomerase (NADP(+))</fullName>
        <shortName evidence="1">KARI</shortName>
        <ecNumber evidence="1">1.1.1.86</ecNumber>
    </recommendedName>
    <alternativeName>
        <fullName evidence="1">Acetohydroxy-acid isomeroreductase</fullName>
        <shortName evidence="1">AHIR</shortName>
    </alternativeName>
    <alternativeName>
        <fullName evidence="1">Alpha-keto-beta-hydroxylacyl reductoisomerase</fullName>
    </alternativeName>
    <alternativeName>
        <fullName evidence="1">Ketol-acid reductoisomerase type 2</fullName>
    </alternativeName>
    <alternativeName>
        <fullName evidence="1">Ketol-acid reductoisomerase type II</fullName>
    </alternativeName>
</protein>
<comment type="function">
    <text evidence="1">Involved in the biosynthesis of branched-chain amino acids (BCAA). Catalyzes an alkyl-migration followed by a ketol-acid reduction of (S)-2-acetolactate (S2AL) to yield (R)-2,3-dihydroxy-isovalerate. In the isomerase reaction, S2AL is rearranged via a Mg-dependent methyl migration to produce 3-hydroxy-3-methyl-2-ketobutyrate (HMKB). In the reductase reaction, this 2-ketoacid undergoes a metal-dependent reduction by NADPH to yield (R)-2,3-dihydroxy-isovalerate.</text>
</comment>
<comment type="catalytic activity">
    <reaction evidence="1">
        <text>(2R)-2,3-dihydroxy-3-methylbutanoate + NADP(+) = (2S)-2-acetolactate + NADPH + H(+)</text>
        <dbReference type="Rhea" id="RHEA:22068"/>
        <dbReference type="ChEBI" id="CHEBI:15378"/>
        <dbReference type="ChEBI" id="CHEBI:49072"/>
        <dbReference type="ChEBI" id="CHEBI:57783"/>
        <dbReference type="ChEBI" id="CHEBI:58349"/>
        <dbReference type="ChEBI" id="CHEBI:58476"/>
        <dbReference type="EC" id="1.1.1.86"/>
    </reaction>
</comment>
<comment type="catalytic activity">
    <reaction evidence="1">
        <text>(2R,3R)-2,3-dihydroxy-3-methylpentanoate + NADP(+) = (S)-2-ethyl-2-hydroxy-3-oxobutanoate + NADPH + H(+)</text>
        <dbReference type="Rhea" id="RHEA:13493"/>
        <dbReference type="ChEBI" id="CHEBI:15378"/>
        <dbReference type="ChEBI" id="CHEBI:49256"/>
        <dbReference type="ChEBI" id="CHEBI:49258"/>
        <dbReference type="ChEBI" id="CHEBI:57783"/>
        <dbReference type="ChEBI" id="CHEBI:58349"/>
        <dbReference type="EC" id="1.1.1.86"/>
    </reaction>
</comment>
<comment type="cofactor">
    <cofactor evidence="1">
        <name>Mg(2+)</name>
        <dbReference type="ChEBI" id="CHEBI:18420"/>
    </cofactor>
    <text evidence="1">Binds 2 magnesium ions per subunit.</text>
</comment>
<comment type="pathway">
    <text evidence="1">Amino-acid biosynthesis; L-isoleucine biosynthesis; L-isoleucine from 2-oxobutanoate: step 2/4.</text>
</comment>
<comment type="pathway">
    <text evidence="1">Amino-acid biosynthesis; L-valine biosynthesis; L-valine from pyruvate: step 2/4.</text>
</comment>
<comment type="similarity">
    <text evidence="1">Belongs to the ketol-acid reductoisomerase family.</text>
</comment>
<name>ILVC_ECOSM</name>
<gene>
    <name evidence="1" type="primary">ilvC</name>
    <name type="ordered locus">EcSMS35_4140</name>
</gene>
<organism>
    <name type="scientific">Escherichia coli (strain SMS-3-5 / SECEC)</name>
    <dbReference type="NCBI Taxonomy" id="439855"/>
    <lineage>
        <taxon>Bacteria</taxon>
        <taxon>Pseudomonadati</taxon>
        <taxon>Pseudomonadota</taxon>
        <taxon>Gammaproteobacteria</taxon>
        <taxon>Enterobacterales</taxon>
        <taxon>Enterobacteriaceae</taxon>
        <taxon>Escherichia</taxon>
    </lineage>
</organism>
<dbReference type="EC" id="1.1.1.86" evidence="1"/>
<dbReference type="EMBL" id="CP000970">
    <property type="protein sequence ID" value="ACB19801.1"/>
    <property type="molecule type" value="Genomic_DNA"/>
</dbReference>
<dbReference type="RefSeq" id="WP_000024951.1">
    <property type="nucleotide sequence ID" value="NC_010498.1"/>
</dbReference>
<dbReference type="SMR" id="B1LLU9"/>
<dbReference type="GeneID" id="75204765"/>
<dbReference type="KEGG" id="ecm:EcSMS35_4140"/>
<dbReference type="HOGENOM" id="CLU_551905_0_0_6"/>
<dbReference type="UniPathway" id="UPA00047">
    <property type="reaction ID" value="UER00056"/>
</dbReference>
<dbReference type="UniPathway" id="UPA00049">
    <property type="reaction ID" value="UER00060"/>
</dbReference>
<dbReference type="Proteomes" id="UP000007011">
    <property type="component" value="Chromosome"/>
</dbReference>
<dbReference type="GO" id="GO:0005829">
    <property type="term" value="C:cytosol"/>
    <property type="evidence" value="ECO:0007669"/>
    <property type="project" value="TreeGrafter"/>
</dbReference>
<dbReference type="GO" id="GO:0004455">
    <property type="term" value="F:ketol-acid reductoisomerase activity"/>
    <property type="evidence" value="ECO:0007669"/>
    <property type="project" value="UniProtKB-UniRule"/>
</dbReference>
<dbReference type="GO" id="GO:0000287">
    <property type="term" value="F:magnesium ion binding"/>
    <property type="evidence" value="ECO:0007669"/>
    <property type="project" value="UniProtKB-UniRule"/>
</dbReference>
<dbReference type="GO" id="GO:0009097">
    <property type="term" value="P:isoleucine biosynthetic process"/>
    <property type="evidence" value="ECO:0007669"/>
    <property type="project" value="UniProtKB-UniRule"/>
</dbReference>
<dbReference type="GO" id="GO:0009099">
    <property type="term" value="P:L-valine biosynthetic process"/>
    <property type="evidence" value="ECO:0007669"/>
    <property type="project" value="UniProtKB-UniRule"/>
</dbReference>
<dbReference type="FunFam" id="1.10.1040.10:FF:000007">
    <property type="entry name" value="Ketol-acid reductoisomerase (NADP(+))"/>
    <property type="match status" value="1"/>
</dbReference>
<dbReference type="FunFam" id="3.40.50.720:FF:000043">
    <property type="entry name" value="Ketol-acid reductoisomerase (NADP(+))"/>
    <property type="match status" value="1"/>
</dbReference>
<dbReference type="Gene3D" id="1.10.1040.10">
    <property type="entry name" value="N-(1-d-carboxylethyl)-l-norvaline Dehydrogenase, domain 2"/>
    <property type="match status" value="1"/>
</dbReference>
<dbReference type="Gene3D" id="3.40.50.720">
    <property type="entry name" value="NAD(P)-binding Rossmann-like Domain"/>
    <property type="match status" value="1"/>
</dbReference>
<dbReference type="HAMAP" id="MF_00435">
    <property type="entry name" value="IlvC"/>
    <property type="match status" value="1"/>
</dbReference>
<dbReference type="InterPro" id="IPR008927">
    <property type="entry name" value="6-PGluconate_DH-like_C_sf"/>
</dbReference>
<dbReference type="InterPro" id="IPR013328">
    <property type="entry name" value="6PGD_dom2"/>
</dbReference>
<dbReference type="InterPro" id="IPR013023">
    <property type="entry name" value="KARI"/>
</dbReference>
<dbReference type="InterPro" id="IPR000506">
    <property type="entry name" value="KARI_C"/>
</dbReference>
<dbReference type="InterPro" id="IPR013116">
    <property type="entry name" value="KARI_N"/>
</dbReference>
<dbReference type="InterPro" id="IPR036291">
    <property type="entry name" value="NAD(P)-bd_dom_sf"/>
</dbReference>
<dbReference type="NCBIfam" id="TIGR00465">
    <property type="entry name" value="ilvC"/>
    <property type="match status" value="1"/>
</dbReference>
<dbReference type="NCBIfam" id="NF003557">
    <property type="entry name" value="PRK05225.1"/>
    <property type="match status" value="1"/>
</dbReference>
<dbReference type="PANTHER" id="PTHR21371">
    <property type="entry name" value="KETOL-ACID REDUCTOISOMERASE, MITOCHONDRIAL"/>
    <property type="match status" value="1"/>
</dbReference>
<dbReference type="PANTHER" id="PTHR21371:SF1">
    <property type="entry name" value="KETOL-ACID REDUCTOISOMERASE, MITOCHONDRIAL"/>
    <property type="match status" value="1"/>
</dbReference>
<dbReference type="Pfam" id="PF01450">
    <property type="entry name" value="KARI_C"/>
    <property type="match status" value="2"/>
</dbReference>
<dbReference type="Pfam" id="PF07991">
    <property type="entry name" value="KARI_N"/>
    <property type="match status" value="1"/>
</dbReference>
<dbReference type="SUPFAM" id="SSF48179">
    <property type="entry name" value="6-phosphogluconate dehydrogenase C-terminal domain-like"/>
    <property type="match status" value="2"/>
</dbReference>
<dbReference type="SUPFAM" id="SSF51735">
    <property type="entry name" value="NAD(P)-binding Rossmann-fold domains"/>
    <property type="match status" value="1"/>
</dbReference>
<dbReference type="PROSITE" id="PS51851">
    <property type="entry name" value="KARI_C"/>
    <property type="match status" value="2"/>
</dbReference>
<dbReference type="PROSITE" id="PS51850">
    <property type="entry name" value="KARI_N"/>
    <property type="match status" value="1"/>
</dbReference>
<keyword id="KW-0028">Amino-acid biosynthesis</keyword>
<keyword id="KW-0100">Branched-chain amino acid biosynthesis</keyword>
<keyword id="KW-0460">Magnesium</keyword>
<keyword id="KW-0479">Metal-binding</keyword>
<keyword id="KW-0521">NADP</keyword>
<keyword id="KW-0560">Oxidoreductase</keyword>
<keyword id="KW-0677">Repeat</keyword>